<proteinExistence type="inferred from homology"/>
<protein>
    <recommendedName>
        <fullName evidence="2">Major capsid protein</fullName>
    </recommendedName>
    <alternativeName>
        <fullName evidence="2">Gene product 20</fullName>
        <shortName>gp20</shortName>
    </alternativeName>
    <alternativeName>
        <fullName evidence="2">Major head protein</fullName>
    </alternativeName>
</protein>
<dbReference type="EMBL" id="AF513032">
    <property type="protein sequence ID" value="AAO83872.1"/>
    <property type="molecule type" value="Genomic_DNA"/>
</dbReference>
<dbReference type="RefSeq" id="NP_817314.1">
    <property type="nucleotide sequence ID" value="NC_004678.1"/>
</dbReference>
<dbReference type="SMR" id="Q859K5"/>
<dbReference type="KEGG" id="vg:1258930"/>
<dbReference type="OrthoDB" id="2742at10239"/>
<dbReference type="Proteomes" id="UP000007462">
    <property type="component" value="Segment"/>
</dbReference>
<dbReference type="GO" id="GO:0019028">
    <property type="term" value="C:viral capsid"/>
    <property type="evidence" value="ECO:0007669"/>
    <property type="project" value="UniProtKB-KW"/>
</dbReference>
<gene>
    <name type="ORF">20</name>
</gene>
<organismHost>
    <name type="scientific">Staphylococcus aureus</name>
    <dbReference type="NCBI Taxonomy" id="1280"/>
</organismHost>
<evidence type="ECO:0000250" key="1">
    <source>
        <dbReference type="UniProtKB" id="P13849"/>
    </source>
</evidence>
<evidence type="ECO:0000305" key="2"/>
<evidence type="ECO:0000305" key="3">
    <source>
    </source>
</evidence>
<evidence type="ECO:0000312" key="4">
    <source>
        <dbReference type="Proteomes" id="UP000007462"/>
    </source>
</evidence>
<feature type="chain" id="PRO_0000432918" description="Major capsid protein">
    <location>
        <begin position="1"/>
        <end position="408"/>
    </location>
</feature>
<reference key="1">
    <citation type="journal article" date="2003" name="FEMS Microbiol. Lett.">
        <title>Complete nucleotide sequence and molecular characterization of two lytic Staphylococcus aureus phages: 44AHJD and P68.</title>
        <authorList>
            <person name="Vybiral D."/>
            <person name="Takac M."/>
            <person name="Loessner M."/>
            <person name="Witte A."/>
            <person name="von Ahsen U."/>
            <person name="Blasi U."/>
        </authorList>
    </citation>
    <scope>NUCLEOTIDE SEQUENCE [GENOMIC DNA]</scope>
    <scope>FUNCTION</scope>
</reference>
<accession>Q859K5</accession>
<name>CAPSD_BP44A</name>
<organism evidence="4">
    <name type="scientific">Staphylococcus phage 44AHJD</name>
    <dbReference type="NCBI Taxonomy" id="204086"/>
    <lineage>
        <taxon>Viruses</taxon>
        <taxon>Duplodnaviria</taxon>
        <taxon>Heunggongvirae</taxon>
        <taxon>Uroviricota</taxon>
        <taxon>Caudoviricetes</taxon>
        <taxon>Rountreeviridae</taxon>
        <taxon>Rakietenvirinae</taxon>
        <taxon>Rosenblumvirus</taxon>
    </lineage>
</organism>
<keyword id="KW-0167">Capsid protein</keyword>
<keyword id="KW-1185">Reference proteome</keyword>
<keyword id="KW-0946">Virion</keyword>
<sequence>MAQQSTKNETALLVAKSAKSALQDFNHDYSKSWTFGDKWDNSNTMFETFVNKYLFPKINETLLIDIALGNRFNWLAKEQDFIGQYSEEYVIMDTVPINMDLSKNEELMLKRNYPRMATKLYGNGIVKKQKFTLNNNDTRFNFQTLADATNYALGVYKKKISDINVLEEKEMRAMLVDYSLNQLSETNVRKATSKEDLASKVFEAILNLQNNSAKYNEVHRASGGAIGQYTTVSKLKDIVILTTDSLKSYLLDTKIANTFQIAGIDFTDHVISFDDLGGVFKVTKEFKLQNQDSIDFLRAYGDYQSQLGDTIPVGAVFTYDVSKLKEFTGNVEEIKPKSDLYAFILDINSIKYKRYTKGMLKPPFHNPEFDEVTHWIHYYSFKAISPFFNKILITDQDVNPKPEEELQE</sequence>
<comment type="function">
    <text evidence="3">Assembles to form an icosahedral capsid.</text>
</comment>
<comment type="subcellular location">
    <subcellularLocation>
        <location evidence="1">Virion</location>
    </subcellularLocation>
</comment>